<sequence length="271" mass="29262">MSKIQSTFQRLQVTGRRALIPFITAGDPAPELTVPLMNALVEGGADIIELGVPFSDPMADGPTIQRASERALANGMTLRRVLDTVREFRTGNAETPVVLMGYANPIEAMGVERFVSAAREAQVDGVLIVDYPPEECESFARAAKDAGLDPIFLLAPTSTEQRFRDVARVGSGYIYYVSLKGVTGSATLDFDEVAARIPQIRAQVGMPVGVGFGIRDAESARRIGEVADAVVIGSRIIEEIERSPRDRLAANVTAFLREVRTALDQVEGSVR</sequence>
<evidence type="ECO:0000255" key="1">
    <source>
        <dbReference type="HAMAP-Rule" id="MF_00131"/>
    </source>
</evidence>
<gene>
    <name evidence="1" type="primary">trpA</name>
    <name type="ordered locus">AZOSEA27000</name>
    <name type="ORF">ebA4776</name>
</gene>
<name>TRPA_AROAE</name>
<organism>
    <name type="scientific">Aromatoleum aromaticum (strain DSM 19018 / LMG 30748 / EbN1)</name>
    <name type="common">Azoarcus sp. (strain EbN1)</name>
    <dbReference type="NCBI Taxonomy" id="76114"/>
    <lineage>
        <taxon>Bacteria</taxon>
        <taxon>Pseudomonadati</taxon>
        <taxon>Pseudomonadota</taxon>
        <taxon>Betaproteobacteria</taxon>
        <taxon>Rhodocyclales</taxon>
        <taxon>Rhodocyclaceae</taxon>
        <taxon>Aromatoleum</taxon>
    </lineage>
</organism>
<protein>
    <recommendedName>
        <fullName evidence="1">Tryptophan synthase alpha chain</fullName>
        <ecNumber evidence="1">4.2.1.20</ecNumber>
    </recommendedName>
</protein>
<keyword id="KW-0028">Amino-acid biosynthesis</keyword>
<keyword id="KW-0057">Aromatic amino acid biosynthesis</keyword>
<keyword id="KW-0456">Lyase</keyword>
<keyword id="KW-1185">Reference proteome</keyword>
<keyword id="KW-0822">Tryptophan biosynthesis</keyword>
<feature type="chain" id="PRO_0000098731" description="Tryptophan synthase alpha chain">
    <location>
        <begin position="1"/>
        <end position="271"/>
    </location>
</feature>
<feature type="active site" description="Proton acceptor" evidence="1">
    <location>
        <position position="49"/>
    </location>
</feature>
<feature type="active site" description="Proton acceptor" evidence="1">
    <location>
        <position position="60"/>
    </location>
</feature>
<proteinExistence type="inferred from homology"/>
<comment type="function">
    <text evidence="1">The alpha subunit is responsible for the aldol cleavage of indoleglycerol phosphate to indole and glyceraldehyde 3-phosphate.</text>
</comment>
<comment type="catalytic activity">
    <reaction evidence="1">
        <text>(1S,2R)-1-C-(indol-3-yl)glycerol 3-phosphate + L-serine = D-glyceraldehyde 3-phosphate + L-tryptophan + H2O</text>
        <dbReference type="Rhea" id="RHEA:10532"/>
        <dbReference type="ChEBI" id="CHEBI:15377"/>
        <dbReference type="ChEBI" id="CHEBI:33384"/>
        <dbReference type="ChEBI" id="CHEBI:57912"/>
        <dbReference type="ChEBI" id="CHEBI:58866"/>
        <dbReference type="ChEBI" id="CHEBI:59776"/>
        <dbReference type="EC" id="4.2.1.20"/>
    </reaction>
</comment>
<comment type="pathway">
    <text evidence="1">Amino-acid biosynthesis; L-tryptophan biosynthesis; L-tryptophan from chorismate: step 5/5.</text>
</comment>
<comment type="subunit">
    <text evidence="1">Tetramer of two alpha and two beta chains.</text>
</comment>
<comment type="similarity">
    <text evidence="1">Belongs to the TrpA family.</text>
</comment>
<dbReference type="EC" id="4.2.1.20" evidence="1"/>
<dbReference type="EMBL" id="CR555306">
    <property type="protein sequence ID" value="CAI08825.1"/>
    <property type="molecule type" value="Genomic_DNA"/>
</dbReference>
<dbReference type="RefSeq" id="WP_011238508.1">
    <property type="nucleotide sequence ID" value="NC_006513.1"/>
</dbReference>
<dbReference type="SMR" id="Q5P1I9"/>
<dbReference type="STRING" id="76114.ebA4776"/>
<dbReference type="KEGG" id="eba:ebA4776"/>
<dbReference type="eggNOG" id="COG0159">
    <property type="taxonomic scope" value="Bacteria"/>
</dbReference>
<dbReference type="HOGENOM" id="CLU_016734_0_0_4"/>
<dbReference type="OrthoDB" id="9804578at2"/>
<dbReference type="UniPathway" id="UPA00035">
    <property type="reaction ID" value="UER00044"/>
</dbReference>
<dbReference type="Proteomes" id="UP000006552">
    <property type="component" value="Chromosome"/>
</dbReference>
<dbReference type="GO" id="GO:0005829">
    <property type="term" value="C:cytosol"/>
    <property type="evidence" value="ECO:0007669"/>
    <property type="project" value="TreeGrafter"/>
</dbReference>
<dbReference type="GO" id="GO:0004834">
    <property type="term" value="F:tryptophan synthase activity"/>
    <property type="evidence" value="ECO:0007669"/>
    <property type="project" value="UniProtKB-UniRule"/>
</dbReference>
<dbReference type="CDD" id="cd04724">
    <property type="entry name" value="Tryptophan_synthase_alpha"/>
    <property type="match status" value="1"/>
</dbReference>
<dbReference type="FunFam" id="3.20.20.70:FF:000037">
    <property type="entry name" value="Tryptophan synthase alpha chain"/>
    <property type="match status" value="1"/>
</dbReference>
<dbReference type="Gene3D" id="3.20.20.70">
    <property type="entry name" value="Aldolase class I"/>
    <property type="match status" value="1"/>
</dbReference>
<dbReference type="HAMAP" id="MF_00131">
    <property type="entry name" value="Trp_synth_alpha"/>
    <property type="match status" value="1"/>
</dbReference>
<dbReference type="InterPro" id="IPR013785">
    <property type="entry name" value="Aldolase_TIM"/>
</dbReference>
<dbReference type="InterPro" id="IPR011060">
    <property type="entry name" value="RibuloseP-bd_barrel"/>
</dbReference>
<dbReference type="InterPro" id="IPR018204">
    <property type="entry name" value="Trp_synthase_alpha_AS"/>
</dbReference>
<dbReference type="InterPro" id="IPR002028">
    <property type="entry name" value="Trp_synthase_suA"/>
</dbReference>
<dbReference type="NCBIfam" id="TIGR00262">
    <property type="entry name" value="trpA"/>
    <property type="match status" value="1"/>
</dbReference>
<dbReference type="PANTHER" id="PTHR43406:SF1">
    <property type="entry name" value="TRYPTOPHAN SYNTHASE ALPHA CHAIN, CHLOROPLASTIC"/>
    <property type="match status" value="1"/>
</dbReference>
<dbReference type="PANTHER" id="PTHR43406">
    <property type="entry name" value="TRYPTOPHAN SYNTHASE, ALPHA CHAIN"/>
    <property type="match status" value="1"/>
</dbReference>
<dbReference type="Pfam" id="PF00290">
    <property type="entry name" value="Trp_syntA"/>
    <property type="match status" value="1"/>
</dbReference>
<dbReference type="SUPFAM" id="SSF51366">
    <property type="entry name" value="Ribulose-phoshate binding barrel"/>
    <property type="match status" value="1"/>
</dbReference>
<dbReference type="PROSITE" id="PS00167">
    <property type="entry name" value="TRP_SYNTHASE_ALPHA"/>
    <property type="match status" value="1"/>
</dbReference>
<accession>Q5P1I9</accession>
<reference key="1">
    <citation type="journal article" date="2005" name="Arch. Microbiol.">
        <title>The genome sequence of an anaerobic aromatic-degrading denitrifying bacterium, strain EbN1.</title>
        <authorList>
            <person name="Rabus R."/>
            <person name="Kube M."/>
            <person name="Heider J."/>
            <person name="Beck A."/>
            <person name="Heitmann K."/>
            <person name="Widdel F."/>
            <person name="Reinhardt R."/>
        </authorList>
    </citation>
    <scope>NUCLEOTIDE SEQUENCE [LARGE SCALE GENOMIC DNA]</scope>
    <source>
        <strain>DSM 19018 / LMG 30748 / EbN1</strain>
    </source>
</reference>